<dbReference type="EMBL" id="AB007965">
    <property type="status" value="NOT_ANNOTATED_CDS"/>
    <property type="molecule type" value="mRNA"/>
</dbReference>
<dbReference type="EMBL" id="AK094514">
    <property type="protein sequence ID" value="BAG52882.1"/>
    <property type="molecule type" value="mRNA"/>
</dbReference>
<dbReference type="EMBL" id="AK160381">
    <property type="protein sequence ID" value="BAD18724.1"/>
    <property type="status" value="ALT_INIT"/>
    <property type="molecule type" value="mRNA"/>
</dbReference>
<dbReference type="EMBL" id="AC084125">
    <property type="status" value="NOT_ANNOTATED_CDS"/>
    <property type="molecule type" value="Genomic_DNA"/>
</dbReference>
<dbReference type="EMBL" id="CH471162">
    <property type="protein sequence ID" value="EAW82088.1"/>
    <property type="molecule type" value="Genomic_DNA"/>
</dbReference>
<dbReference type="EMBL" id="CH471162">
    <property type="protein sequence ID" value="EAW82089.1"/>
    <property type="molecule type" value="Genomic_DNA"/>
</dbReference>
<dbReference type="EMBL" id="BC004544">
    <property type="protein sequence ID" value="AAH04544.2"/>
    <property type="molecule type" value="mRNA"/>
</dbReference>
<dbReference type="CCDS" id="CCDS83335.1">
    <molecule id="P0DTL6-5"/>
</dbReference>
<dbReference type="RefSeq" id="NP_001317547.1">
    <molecule id="P0DTL6-5"/>
    <property type="nucleotide sequence ID" value="NM_001330618.2"/>
</dbReference>
<dbReference type="RefSeq" id="NP_001394977.1">
    <molecule id="P0DTL6-2"/>
    <property type="nucleotide sequence ID" value="NM_001408048.1"/>
</dbReference>
<dbReference type="RefSeq" id="NP_001394978.1">
    <molecule id="P0DTL6-4"/>
    <property type="nucleotide sequence ID" value="NM_001408049.1"/>
</dbReference>
<dbReference type="RefSeq" id="NP_612505.1">
    <molecule id="P0DTL6-1"/>
    <property type="nucleotide sequence ID" value="NM_138496.1"/>
</dbReference>
<dbReference type="RefSeq" id="XP_006716623.1">
    <property type="nucleotide sequence ID" value="XM_006716560.3"/>
</dbReference>
<dbReference type="RefSeq" id="XP_006716624.1">
    <property type="nucleotide sequence ID" value="XM_006716561.3"/>
</dbReference>
<dbReference type="RefSeq" id="XP_011515353.1">
    <property type="nucleotide sequence ID" value="XM_011517051.1"/>
</dbReference>
<dbReference type="FunCoup" id="P0DTL6">
    <property type="interactions" value="7"/>
</dbReference>
<dbReference type="IntAct" id="P0DTL6">
    <property type="interactions" value="20"/>
</dbReference>
<dbReference type="iPTMnet" id="P0DTL6"/>
<dbReference type="PhosphoSitePlus" id="P0DTL6"/>
<dbReference type="BioMuta" id="CYHR1"/>
<dbReference type="DMDM" id="182641989"/>
<dbReference type="PeptideAtlas" id="P0DTL6"/>
<dbReference type="ProteomicsDB" id="21106"/>
<dbReference type="Antibodypedia" id="52728">
    <property type="antibodies" value="22 antibodies from 10 providers"/>
</dbReference>
<dbReference type="DNASU" id="50626"/>
<dbReference type="Ensembl" id="ENST00000530374.6">
    <molecule id="P0DTL6-5"/>
    <property type="protein sequence ID" value="ENSP00000433769.1"/>
    <property type="gene ID" value="ENSG00000187954.14"/>
</dbReference>
<dbReference type="GeneID" id="50626"/>
<dbReference type="KEGG" id="hsa:157542"/>
<dbReference type="KEGG" id="hsa:50626"/>
<dbReference type="KEGG" id="hsa:84773"/>
<dbReference type="MANE-Select" id="ENST00000530374.6">
    <property type="protein sequence ID" value="ENSP00000433769.1"/>
    <property type="RefSeq nucleotide sequence ID" value="NM_001330618.2"/>
    <property type="RefSeq protein sequence ID" value="NP_001317547.1"/>
</dbReference>
<dbReference type="AGR" id="HGNC:17806"/>
<dbReference type="AGR" id="HGNC:56235"/>
<dbReference type="AGR" id="HGNC:56752"/>
<dbReference type="CTD" id="157542"/>
<dbReference type="CTD" id="50626"/>
<dbReference type="CTD" id="84773"/>
<dbReference type="DisGeNET" id="157542"/>
<dbReference type="DisGeNET" id="50626"/>
<dbReference type="DisGeNET" id="84773"/>
<dbReference type="GeneCards" id="ZFTRAF1"/>
<dbReference type="HGNC" id="HGNC:17806">
    <property type="gene designation" value="ZFTRAF1"/>
</dbReference>
<dbReference type="MalaCards" id="ZFTRAF1"/>
<dbReference type="MIM" id="616635">
    <property type="type" value="gene"/>
</dbReference>
<dbReference type="neXtProt" id="NX_Q6ZMK1"/>
<dbReference type="OpenTargets" id="ENSG00000187954"/>
<dbReference type="VEuPathDB" id="HostDB:ENSG00000187954"/>
<dbReference type="GeneTree" id="ENSGT00390000018258"/>
<dbReference type="OMA" id="HERPEHE"/>
<dbReference type="OrthoDB" id="10062218at2759"/>
<dbReference type="PhylomeDB" id="Q6ZMK1"/>
<dbReference type="TreeFam" id="TF324281"/>
<dbReference type="PathwayCommons" id="Q6ZMK1"/>
<dbReference type="SignaLink" id="Q6ZMK1"/>
<dbReference type="BioGRID-ORCS" id="50626">
    <property type="hits" value="29 hits in 1157 CRISPR screens"/>
</dbReference>
<dbReference type="ChiTaRS" id="CYHR1">
    <property type="organism name" value="human"/>
</dbReference>
<dbReference type="GenomeRNAi" id="50626"/>
<dbReference type="PRO" id="PR:P0DTL6"/>
<dbReference type="Proteomes" id="UP000005640">
    <property type="component" value="Chromosome 8"/>
</dbReference>
<dbReference type="Bgee" id="ENSG00000187954">
    <property type="expression patterns" value="Expressed in right hemisphere of cerebellum and 179 other cell types or tissues"/>
</dbReference>
<dbReference type="GO" id="GO:0005635">
    <property type="term" value="C:nuclear envelope"/>
    <property type="evidence" value="ECO:0007669"/>
    <property type="project" value="Ensembl"/>
</dbReference>
<dbReference type="GO" id="GO:0005634">
    <property type="term" value="C:nucleus"/>
    <property type="evidence" value="ECO:0000318"/>
    <property type="project" value="GO_Central"/>
</dbReference>
<dbReference type="GO" id="GO:0048471">
    <property type="term" value="C:perinuclear region of cytoplasm"/>
    <property type="evidence" value="ECO:0007669"/>
    <property type="project" value="UniProtKB-SubCell"/>
</dbReference>
<dbReference type="GO" id="GO:0008270">
    <property type="term" value="F:zinc ion binding"/>
    <property type="evidence" value="ECO:0007669"/>
    <property type="project" value="UniProtKB-KW"/>
</dbReference>
<dbReference type="CDD" id="cd22861">
    <property type="entry name" value="CYHR1_C"/>
    <property type="match status" value="1"/>
</dbReference>
<dbReference type="CDD" id="cd16505">
    <property type="entry name" value="RING-HC_CYHR1"/>
    <property type="match status" value="1"/>
</dbReference>
<dbReference type="FunFam" id="3.30.40.10:FF:000498">
    <property type="entry name" value="Cysteine and histidine rich 1"/>
    <property type="match status" value="1"/>
</dbReference>
<dbReference type="Gene3D" id="3.30.40.10">
    <property type="entry name" value="Zinc/RING finger domain, C3HC4 (zinc finger)"/>
    <property type="match status" value="2"/>
</dbReference>
<dbReference type="InterPro" id="IPR049548">
    <property type="entry name" value="Sina-like_RING"/>
</dbReference>
<dbReference type="InterPro" id="IPR039338">
    <property type="entry name" value="ZFTRAF1"/>
</dbReference>
<dbReference type="InterPro" id="IPR001841">
    <property type="entry name" value="Znf_RING"/>
</dbReference>
<dbReference type="InterPro" id="IPR013083">
    <property type="entry name" value="Znf_RING/FYVE/PHD"/>
</dbReference>
<dbReference type="InterPro" id="IPR001293">
    <property type="entry name" value="Znf_TRAF"/>
</dbReference>
<dbReference type="PANTHER" id="PTHR23059">
    <property type="entry name" value="CYSTEINE AND HISTIDINE-RICH PROTEIN 1"/>
    <property type="match status" value="1"/>
</dbReference>
<dbReference type="PANTHER" id="PTHR23059:SF4">
    <property type="entry name" value="ZINC FINGER TRAF-TYPE-CONTAINING PROTEIN 1"/>
    <property type="match status" value="1"/>
</dbReference>
<dbReference type="Pfam" id="PF21362">
    <property type="entry name" value="Sina_RING"/>
    <property type="match status" value="1"/>
</dbReference>
<dbReference type="SUPFAM" id="SSF57850">
    <property type="entry name" value="RING/U-box"/>
    <property type="match status" value="1"/>
</dbReference>
<dbReference type="SUPFAM" id="SSF49599">
    <property type="entry name" value="TRAF domain-like"/>
    <property type="match status" value="1"/>
</dbReference>
<dbReference type="PROSITE" id="PS50089">
    <property type="entry name" value="ZF_RING_2"/>
    <property type="match status" value="1"/>
</dbReference>
<dbReference type="PROSITE" id="PS50145">
    <property type="entry name" value="ZF_TRAF"/>
    <property type="match status" value="1"/>
</dbReference>
<keyword id="KW-0025">Alternative splicing</keyword>
<keyword id="KW-0963">Cytoplasm</keyword>
<keyword id="KW-0479">Metal-binding</keyword>
<keyword id="KW-1267">Proteomics identification</keyword>
<keyword id="KW-1185">Reference proteome</keyword>
<keyword id="KW-0862">Zinc</keyword>
<keyword id="KW-0863">Zinc-finger</keyword>
<protein>
    <recommendedName>
        <fullName evidence="5">Zinc finger TRAF-type-containing protein 1</fullName>
    </recommendedName>
    <alternativeName>
        <fullName>Cysteine and histidine-rich protein 1</fullName>
    </alternativeName>
</protein>
<name>ZTRF1_HUMAN</name>
<evidence type="ECO:0000250" key="1">
    <source>
        <dbReference type="UniProtKB" id="Q9QXA1"/>
    </source>
</evidence>
<evidence type="ECO:0000255" key="2">
    <source>
        <dbReference type="PROSITE-ProRule" id="PRU00175"/>
    </source>
</evidence>
<evidence type="ECO:0000255" key="3">
    <source>
        <dbReference type="PROSITE-ProRule" id="PRU00207"/>
    </source>
</evidence>
<evidence type="ECO:0000256" key="4">
    <source>
        <dbReference type="SAM" id="MobiDB-lite"/>
    </source>
</evidence>
<evidence type="ECO:0000305" key="5"/>
<evidence type="ECO:0000312" key="6">
    <source>
        <dbReference type="HGNC" id="HGNC:17806"/>
    </source>
</evidence>
<organism>
    <name type="scientific">Homo sapiens</name>
    <name type="common">Human</name>
    <dbReference type="NCBI Taxonomy" id="9606"/>
    <lineage>
        <taxon>Eukaryota</taxon>
        <taxon>Metazoa</taxon>
        <taxon>Chordata</taxon>
        <taxon>Craniata</taxon>
        <taxon>Vertebrata</taxon>
        <taxon>Euteleostomi</taxon>
        <taxon>Mammalia</taxon>
        <taxon>Eutheria</taxon>
        <taxon>Euarchontoglires</taxon>
        <taxon>Primates</taxon>
        <taxon>Haplorrhini</taxon>
        <taxon>Catarrhini</taxon>
        <taxon>Hominidae</taxon>
        <taxon>Homo</taxon>
    </lineage>
</organism>
<reference key="1">
    <citation type="journal article" date="1997" name="DNA Res.">
        <title>Characterization of cDNA clones in size-fractionated cDNA libraries from human brain.</title>
        <authorList>
            <person name="Seki N."/>
            <person name="Ohira M."/>
            <person name="Nagase T."/>
            <person name="Ishikawa K."/>
            <person name="Miyajima N."/>
            <person name="Nakajima D."/>
            <person name="Nomura N."/>
            <person name="Ohara O."/>
        </authorList>
    </citation>
    <scope>NUCLEOTIDE SEQUENCE [LARGE SCALE MRNA] (ISOFORM 4)</scope>
    <source>
        <tissue>Brain</tissue>
    </source>
</reference>
<reference key="2">
    <citation type="journal article" date="2004" name="Nat. Genet.">
        <title>Complete sequencing and characterization of 21,243 full-length human cDNAs.</title>
        <authorList>
            <person name="Ota T."/>
            <person name="Suzuki Y."/>
            <person name="Nishikawa T."/>
            <person name="Otsuki T."/>
            <person name="Sugiyama T."/>
            <person name="Irie R."/>
            <person name="Wakamatsu A."/>
            <person name="Hayashi K."/>
            <person name="Sato H."/>
            <person name="Nagai K."/>
            <person name="Kimura K."/>
            <person name="Makita H."/>
            <person name="Sekine M."/>
            <person name="Obayashi M."/>
            <person name="Nishi T."/>
            <person name="Shibahara T."/>
            <person name="Tanaka T."/>
            <person name="Ishii S."/>
            <person name="Yamamoto J."/>
            <person name="Saito K."/>
            <person name="Kawai Y."/>
            <person name="Isono Y."/>
            <person name="Nakamura Y."/>
            <person name="Nagahari K."/>
            <person name="Murakami K."/>
            <person name="Yasuda T."/>
            <person name="Iwayanagi T."/>
            <person name="Wagatsuma M."/>
            <person name="Shiratori A."/>
            <person name="Sudo H."/>
            <person name="Hosoiri T."/>
            <person name="Kaku Y."/>
            <person name="Kodaira H."/>
            <person name="Kondo H."/>
            <person name="Sugawara M."/>
            <person name="Takahashi M."/>
            <person name="Kanda K."/>
            <person name="Yokoi T."/>
            <person name="Furuya T."/>
            <person name="Kikkawa E."/>
            <person name="Omura Y."/>
            <person name="Abe K."/>
            <person name="Kamihara K."/>
            <person name="Katsuta N."/>
            <person name="Sato K."/>
            <person name="Tanikawa M."/>
            <person name="Yamazaki M."/>
            <person name="Ninomiya K."/>
            <person name="Ishibashi T."/>
            <person name="Yamashita H."/>
            <person name="Murakawa K."/>
            <person name="Fujimori K."/>
            <person name="Tanai H."/>
            <person name="Kimata M."/>
            <person name="Watanabe M."/>
            <person name="Hiraoka S."/>
            <person name="Chiba Y."/>
            <person name="Ishida S."/>
            <person name="Ono Y."/>
            <person name="Takiguchi S."/>
            <person name="Watanabe S."/>
            <person name="Yosida M."/>
            <person name="Hotuta T."/>
            <person name="Kusano J."/>
            <person name="Kanehori K."/>
            <person name="Takahashi-Fujii A."/>
            <person name="Hara H."/>
            <person name="Tanase T.-O."/>
            <person name="Nomura Y."/>
            <person name="Togiya S."/>
            <person name="Komai F."/>
            <person name="Hara R."/>
            <person name="Takeuchi K."/>
            <person name="Arita M."/>
            <person name="Imose N."/>
            <person name="Musashino K."/>
            <person name="Yuuki H."/>
            <person name="Oshima A."/>
            <person name="Sasaki N."/>
            <person name="Aotsuka S."/>
            <person name="Yoshikawa Y."/>
            <person name="Matsunawa H."/>
            <person name="Ichihara T."/>
            <person name="Shiohata N."/>
            <person name="Sano S."/>
            <person name="Moriya S."/>
            <person name="Momiyama H."/>
            <person name="Satoh N."/>
            <person name="Takami S."/>
            <person name="Terashima Y."/>
            <person name="Suzuki O."/>
            <person name="Nakagawa S."/>
            <person name="Senoh A."/>
            <person name="Mizoguchi H."/>
            <person name="Goto Y."/>
            <person name="Shimizu F."/>
            <person name="Wakebe H."/>
            <person name="Hishigaki H."/>
            <person name="Watanabe T."/>
            <person name="Sugiyama A."/>
            <person name="Takemoto M."/>
            <person name="Kawakami B."/>
            <person name="Yamazaki M."/>
            <person name="Watanabe K."/>
            <person name="Kumagai A."/>
            <person name="Itakura S."/>
            <person name="Fukuzumi Y."/>
            <person name="Fujimori Y."/>
            <person name="Komiyama M."/>
            <person name="Tashiro H."/>
            <person name="Tanigami A."/>
            <person name="Fujiwara T."/>
            <person name="Ono T."/>
            <person name="Yamada K."/>
            <person name="Fujii Y."/>
            <person name="Ozaki K."/>
            <person name="Hirao M."/>
            <person name="Ohmori Y."/>
            <person name="Kawabata A."/>
            <person name="Hikiji T."/>
            <person name="Kobatake N."/>
            <person name="Inagaki H."/>
            <person name="Ikema Y."/>
            <person name="Okamoto S."/>
            <person name="Okitani R."/>
            <person name="Kawakami T."/>
            <person name="Noguchi S."/>
            <person name="Itoh T."/>
            <person name="Shigeta K."/>
            <person name="Senba T."/>
            <person name="Matsumura K."/>
            <person name="Nakajima Y."/>
            <person name="Mizuno T."/>
            <person name="Morinaga M."/>
            <person name="Sasaki M."/>
            <person name="Togashi T."/>
            <person name="Oyama M."/>
            <person name="Hata H."/>
            <person name="Watanabe M."/>
            <person name="Komatsu T."/>
            <person name="Mizushima-Sugano J."/>
            <person name="Satoh T."/>
            <person name="Shirai Y."/>
            <person name="Takahashi Y."/>
            <person name="Nakagawa K."/>
            <person name="Okumura K."/>
            <person name="Nagase T."/>
            <person name="Nomura N."/>
            <person name="Kikuchi H."/>
            <person name="Masuho Y."/>
            <person name="Yamashita R."/>
            <person name="Nakai K."/>
            <person name="Yada T."/>
            <person name="Nakamura Y."/>
            <person name="Ohara O."/>
            <person name="Isogai T."/>
            <person name="Sugano S."/>
        </authorList>
    </citation>
    <scope>NUCLEOTIDE SEQUENCE [LARGE SCALE MRNA] (ISOFORMS 1 AND 2)</scope>
    <source>
        <tissue>Brain cortex</tissue>
        <tissue>Spleen</tissue>
    </source>
</reference>
<reference key="3">
    <citation type="journal article" date="2006" name="Nature">
        <title>DNA sequence and analysis of human chromosome 8.</title>
        <authorList>
            <person name="Nusbaum C."/>
            <person name="Mikkelsen T.S."/>
            <person name="Zody M.C."/>
            <person name="Asakawa S."/>
            <person name="Taudien S."/>
            <person name="Garber M."/>
            <person name="Kodira C.D."/>
            <person name="Schueler M.G."/>
            <person name="Shimizu A."/>
            <person name="Whittaker C.A."/>
            <person name="Chang J.L."/>
            <person name="Cuomo C.A."/>
            <person name="Dewar K."/>
            <person name="FitzGerald M.G."/>
            <person name="Yang X."/>
            <person name="Allen N.R."/>
            <person name="Anderson S."/>
            <person name="Asakawa T."/>
            <person name="Blechschmidt K."/>
            <person name="Bloom T."/>
            <person name="Borowsky M.L."/>
            <person name="Butler J."/>
            <person name="Cook A."/>
            <person name="Corum B."/>
            <person name="DeArellano K."/>
            <person name="DeCaprio D."/>
            <person name="Dooley K.T."/>
            <person name="Dorris L. III"/>
            <person name="Engels R."/>
            <person name="Gloeckner G."/>
            <person name="Hafez N."/>
            <person name="Hagopian D.S."/>
            <person name="Hall J.L."/>
            <person name="Ishikawa S.K."/>
            <person name="Jaffe D.B."/>
            <person name="Kamat A."/>
            <person name="Kudoh J."/>
            <person name="Lehmann R."/>
            <person name="Lokitsang T."/>
            <person name="Macdonald P."/>
            <person name="Major J.E."/>
            <person name="Matthews C.D."/>
            <person name="Mauceli E."/>
            <person name="Menzel U."/>
            <person name="Mihalev A.H."/>
            <person name="Minoshima S."/>
            <person name="Murayama Y."/>
            <person name="Naylor J.W."/>
            <person name="Nicol R."/>
            <person name="Nguyen C."/>
            <person name="O'Leary S.B."/>
            <person name="O'Neill K."/>
            <person name="Parker S.C.J."/>
            <person name="Polley A."/>
            <person name="Raymond C.K."/>
            <person name="Reichwald K."/>
            <person name="Rodriguez J."/>
            <person name="Sasaki T."/>
            <person name="Schilhabel M."/>
            <person name="Siddiqui R."/>
            <person name="Smith C.L."/>
            <person name="Sneddon T.P."/>
            <person name="Talamas J.A."/>
            <person name="Tenzin P."/>
            <person name="Topham K."/>
            <person name="Venkataraman V."/>
            <person name="Wen G."/>
            <person name="Yamazaki S."/>
            <person name="Young S.K."/>
            <person name="Zeng Q."/>
            <person name="Zimmer A.R."/>
            <person name="Rosenthal A."/>
            <person name="Birren B.W."/>
            <person name="Platzer M."/>
            <person name="Shimizu N."/>
            <person name="Lander E.S."/>
        </authorList>
    </citation>
    <scope>NUCLEOTIDE SEQUENCE [LARGE SCALE GENOMIC DNA]</scope>
</reference>
<reference key="4">
    <citation type="submission" date="2005-09" db="EMBL/GenBank/DDBJ databases">
        <authorList>
            <person name="Mural R.J."/>
            <person name="Istrail S."/>
            <person name="Sutton G.G."/>
            <person name="Florea L."/>
            <person name="Halpern A.L."/>
            <person name="Mobarry C.M."/>
            <person name="Lippert R."/>
            <person name="Walenz B."/>
            <person name="Shatkay H."/>
            <person name="Dew I."/>
            <person name="Miller J.R."/>
            <person name="Flanigan M.J."/>
            <person name="Edwards N.J."/>
            <person name="Bolanos R."/>
            <person name="Fasulo D."/>
            <person name="Halldorsson B.V."/>
            <person name="Hannenhalli S."/>
            <person name="Turner R."/>
            <person name="Yooseph S."/>
            <person name="Lu F."/>
            <person name="Nusskern D.R."/>
            <person name="Shue B.C."/>
            <person name="Zheng X.H."/>
            <person name="Zhong F."/>
            <person name="Delcher A.L."/>
            <person name="Huson D.H."/>
            <person name="Kravitz S.A."/>
            <person name="Mouchard L."/>
            <person name="Reinert K."/>
            <person name="Remington K.A."/>
            <person name="Clark A.G."/>
            <person name="Waterman M.S."/>
            <person name="Eichler E.E."/>
            <person name="Adams M.D."/>
            <person name="Hunkapiller M.W."/>
            <person name="Myers E.W."/>
            <person name="Venter J.C."/>
        </authorList>
    </citation>
    <scope>NUCLEOTIDE SEQUENCE [LARGE SCALE GENOMIC DNA]</scope>
</reference>
<reference key="5">
    <citation type="journal article" date="2004" name="Genome Res.">
        <title>The status, quality, and expansion of the NIH full-length cDNA project: the Mammalian Gene Collection (MGC).</title>
        <authorList>
            <consortium name="The MGC Project Team"/>
        </authorList>
    </citation>
    <scope>NUCLEOTIDE SEQUENCE [LARGE SCALE MRNA] OF 127-404 (ISOFORM 1)</scope>
    <source>
        <tissue>Lung</tissue>
    </source>
</reference>
<accession>P0DTL6</accession>
<accession>B3KSX0</accession>
<accession>D3DWM3</accession>
<accession>E9PJD7</accession>
<accession>Q6ZMK1</accession>
<accession>Q9BSF6</accession>
<accession>Q9BSU6</accession>
<proteinExistence type="evidence at protein level"/>
<sequence>MSGAEEAGGGGPAAGPAGSVPAGVGVGVGAGPGAAAGQAAAAALGEAAGPGLPDEAGLAGARQLQLQEAAGDPDAPPKKRLRAAEAAEAAAAAAAAGSGKLEERLYSVLCCTVCLDLPKASVYQCTNGHLMCAGCFIHLLADARLKEEQATCPNCRCEISKSLCCRNLAVEKAVSELPSECGFCLRQFPRSLLERHQKEECQDRVTQCKYKRIGCPWHGPFHELTVHEAACAHPTKTGSELMEILDGMDQSHRKEMQLYNSIFSLLSFEKIGYTEVQFRPYRTDDFITRLYYETPRFTVLNQTWVLKARVNDSERNPNLSCKRTLSFQLLLKSKVTAPLECSFLLLKGPYDDVRISPVIYHFVFTNESNETDYVPLPIIDSVECNKLLAAKNINLRLFLFQIQK</sequence>
<gene>
    <name evidence="6" type="primary">ZFTRAF1</name>
    <name type="synonym">CYHR1</name>
    <name type="synonym">KIAA0496</name>
</gene>
<feature type="chain" id="PRO_0000328852" description="Zinc finger TRAF-type-containing protein 1">
    <location>
        <begin position="1"/>
        <end position="404"/>
    </location>
</feature>
<feature type="zinc finger region" description="RING-type; degenerate" evidence="2">
    <location>
        <begin position="111"/>
        <end position="156"/>
    </location>
</feature>
<feature type="zinc finger region" description="TRAF-type" evidence="3">
    <location>
        <begin position="152"/>
        <end position="225"/>
    </location>
</feature>
<feature type="region of interest" description="Disordered" evidence="4">
    <location>
        <begin position="1"/>
        <end position="22"/>
    </location>
</feature>
<feature type="compositionally biased region" description="Gly residues" evidence="4">
    <location>
        <begin position="1"/>
        <end position="13"/>
    </location>
</feature>
<feature type="splice variant" id="VSP_061632" description="In isoform 4 and isoform 2.">
    <location>
        <begin position="1"/>
        <end position="130"/>
    </location>
</feature>
<feature type="splice variant" id="VSP_061633" description="In isoform 1.">
    <original>MSGAEEAGGGGPAAGPAGSVPAGVGVGVGAGPGAAAGQAAAAALGEAAGPGLPDEAGLAGARQLQLQEAAGDPDAPPKKRLRAAEAAEAAAAAAAAGSGKLEERLYSVLCCTVCLDLPKASVYQ</original>
    <variation>MAPKPGAEWSTALSHLVLGVVSLHAAVSTAEASRGAAAGFLLQVLAATTTLAPGLSTHEDCLAGAWVATVIGLPLLAFDFHW</variation>
    <location>
        <begin position="1"/>
        <end position="124"/>
    </location>
</feature>
<feature type="splice variant" id="VSP_061634" description="In isoform 4.">
    <original>EVQFRPYRTDDFITRLYYETPRFTVLNQTWVLKARVNDSERNPNLSCKRTLSFQLLLKS</original>
    <variation>GEAPRRLLHATQVWVGGLAARSLGAAGSGHWALTAPDSRALDKLPVDRWTPRSRRQAGD</variation>
    <location>
        <begin position="275"/>
        <end position="333"/>
    </location>
</feature>
<feature type="splice variant" id="VSP_061635" description="In isoform 4.">
    <location>
        <begin position="334"/>
        <end position="404"/>
    </location>
</feature>
<comment type="subunit">
    <text evidence="1">Interacts with LGALS3.</text>
</comment>
<comment type="interaction">
    <interactant intactId="EBI-10984242">
        <id>P0DTL6</id>
    </interactant>
    <interactant intactId="EBI-473850">
        <id>P61086</id>
        <label>UBE2K</label>
    </interactant>
    <organismsDiffer>false</organismsDiffer>
    <experiments>3</experiments>
</comment>
<comment type="subcellular location">
    <subcellularLocation>
        <location evidence="1">Cytoplasm</location>
    </subcellularLocation>
    <subcellularLocation>
        <location evidence="1">Cytoplasm</location>
        <location evidence="1">Perinuclear region</location>
    </subcellularLocation>
    <text evidence="1">Shows a prominent perinuclear and cytoplasmic localization.</text>
</comment>
<comment type="alternative products">
    <event type="alternative splicing"/>
    <isoform>
        <id>P0DTL6-5</id>
        <name>5</name>
        <sequence type="displayed"/>
    </isoform>
    <isoform>
        <id>P0DTL6-1</id>
        <id>Q6ZMK1-1</id>
        <name>1</name>
        <sequence type="described" ref="VSP_061633"/>
    </isoform>
    <isoform>
        <id>P0DTL6-2</id>
        <id>Q6ZMK1-2</id>
        <name>2</name>
        <sequence type="described" ref="VSP_061632"/>
    </isoform>
    <isoform>
        <id>P0DTL6-4</id>
        <id>Q6ZMK1-4</id>
        <name>4</name>
        <sequence type="described" ref="VSP_061632 VSP_061634 VSP_061635"/>
    </isoform>
</comment>
<comment type="similarity">
    <text evidence="5">Belongs to the ZFTRAF1 family.</text>
</comment>
<comment type="sequence caution" evidence="5">
    <conflict type="erroneous initiation">
        <sequence resource="EMBL-CDS" id="BAD18724"/>
    </conflict>
    <text>Extended N-terminus.</text>
</comment>